<sequence length="598" mass="66622">MPCVQAQYGSSPQGASPASQSYSYHSSGEYSSDFLTPEFVKFSMDLTNTEITATTSLPSFSTFMDNYSTGYDVKPPCLYQMPLSGQQSSIKVEDIQMHNYQQHSHLPPQSEEMMPHSGSVYYKPSSPPTPSTPGFQVQHSPMWDDPGSLHNFHQNYVATTHMIEQRKTPVSRLSLFSFKQSRPGTPVSSCQMRFDGPLHVPMNPEPAGSHHVVDGQTFAVPNPIRKPASMGFPGLQIGHASQLLDTQVPSPPSRGSPSNEGLCAVCGDNAACQHYGVRTCEGCKGFFKRTVQKNAKYVCLANKNCPVDKRRRNRCQYCRFQKCLAVGMVKEVVRTDSLKGRRGRLPSKPKSPQDPSPPSPPVSLISALVRAHVDSNPAMTSLDYSRFQANPDYQMSGDDTQHIQQFYDLLTGSMEIIRGWAEKIPGFADLPKADQDLLFESAFLELFVLRLAYRSNPVEGKLIFCNGVVLHRLQCVRGFGEWIDSIVEFSSNLQNMNIDISAFSCIAALAMVTERHGLKEPKRVEELQNKIVNCLKDHVTFNNGGLNRPNYLSKLLGKLPELRTLCTQGLQRIFYLKLEDLVPPPAIIDKLFLDTLPF</sequence>
<gene>
    <name type="primary">Nr4a2</name>
    <name type="synonym">Hzf-3</name>
    <name type="synonym">Nurr1</name>
    <name type="synonym">Rnr1</name>
</gene>
<keyword id="KW-0963">Cytoplasm</keyword>
<keyword id="KW-0238">DNA-binding</keyword>
<keyword id="KW-0479">Metal-binding</keyword>
<keyword id="KW-0539">Nucleus</keyword>
<keyword id="KW-0675">Receptor</keyword>
<keyword id="KW-1185">Reference proteome</keyword>
<keyword id="KW-0804">Transcription</keyword>
<keyword id="KW-0805">Transcription regulation</keyword>
<keyword id="KW-0862">Zinc</keyword>
<keyword id="KW-0863">Zinc-finger</keyword>
<organism>
    <name type="scientific">Rattus norvegicus</name>
    <name type="common">Rat</name>
    <dbReference type="NCBI Taxonomy" id="10116"/>
    <lineage>
        <taxon>Eukaryota</taxon>
        <taxon>Metazoa</taxon>
        <taxon>Chordata</taxon>
        <taxon>Craniata</taxon>
        <taxon>Vertebrata</taxon>
        <taxon>Euteleostomi</taxon>
        <taxon>Mammalia</taxon>
        <taxon>Eutheria</taxon>
        <taxon>Euarchontoglires</taxon>
        <taxon>Glires</taxon>
        <taxon>Rodentia</taxon>
        <taxon>Myomorpha</taxon>
        <taxon>Muroidea</taxon>
        <taxon>Muridae</taxon>
        <taxon>Murinae</taxon>
        <taxon>Rattus</taxon>
    </lineage>
</organism>
<reference key="1">
    <citation type="journal article" date="1994" name="Brain Res. Mol. Brain Res.">
        <title>Expression of nuclear hormone receptors within the rat hippocampus: identification of novel orphan receptors.</title>
        <authorList>
            <person name="Pena de Ortiz S."/>
            <person name="Cannon M.M."/>
            <person name="Jamieson G.A. Jr."/>
        </authorList>
    </citation>
    <scope>NUCLEOTIDE SEQUENCE [MRNA]</scope>
    <source>
        <strain>Sprague-Dawley</strain>
        <tissue>Hippocampus</tissue>
    </source>
</reference>
<reference key="2">
    <citation type="journal article" date="1993" name="J. Biol. Chem.">
        <title>RNR-1, a nuclear receptor in the NGFI-B/Nur77 family that is rapidly induced in regenerating liver.</title>
        <authorList>
            <person name="Scearce L.M."/>
            <person name="Laz T.M."/>
            <person name="Hazel T.G."/>
            <person name="Lau L.F."/>
            <person name="Taub R."/>
        </authorList>
    </citation>
    <scope>NUCLEOTIDE SEQUENCE [MRNA]</scope>
    <scope>FUNCTION</scope>
    <source>
        <tissue>Liver</tissue>
    </source>
</reference>
<reference key="3">
    <citation type="journal article" date="1997" name="Brain Res. Mol. Brain Res.">
        <title>Rat nurr1 is prominently expressed in perirhinal cortex, and differentially induced in the hippocampal dentate gyrus by electroconvulsive vs. kindled seizures.</title>
        <authorList>
            <person name="Xing G.Q."/>
            <person name="Zhang L.X."/>
            <person name="Zhang L."/>
            <person name="Heynen T."/>
            <person name="Li X.L."/>
            <person name="Smith M.A."/>
            <person name="Weiss S.R.B."/>
            <person name="Feldman A.N."/>
            <person name="Detera-Wadleigh S."/>
            <person name="Chuang D.M."/>
            <person name="Post R.M."/>
        </authorList>
    </citation>
    <scope>NUCLEOTIDE SEQUENCE [MRNA]</scope>
    <source>
        <strain>Sprague-Dawley</strain>
        <tissue>Brain</tissue>
    </source>
</reference>
<reference key="4">
    <citation type="journal article" date="2009" name="J. Neurosci. Res.">
        <title>Immunocytochemical expression of dopamine-related transcription factors Pitx3 and Nurr1 in prenatally stressed adult rats.</title>
        <authorList>
            <person name="Katunar M.R."/>
            <person name="Saez T."/>
            <person name="Brusco A."/>
            <person name="Antonelli M.C."/>
        </authorList>
    </citation>
    <scope>TISSUE SPECIFICITY</scope>
</reference>
<feature type="chain" id="PRO_0000053720" description="Nuclear receptor subfamily 4 group A member 2">
    <location>
        <begin position="1"/>
        <end position="598"/>
    </location>
</feature>
<feature type="domain" description="NR LBD" evidence="5">
    <location>
        <begin position="360"/>
        <end position="595"/>
    </location>
</feature>
<feature type="DNA-binding region" description="Nuclear receptor" evidence="4">
    <location>
        <begin position="260"/>
        <end position="335"/>
    </location>
</feature>
<feature type="zinc finger region" description="NR C4-type" evidence="4">
    <location>
        <begin position="263"/>
        <end position="283"/>
    </location>
</feature>
<feature type="zinc finger region" description="NR C4-type" evidence="4">
    <location>
        <begin position="299"/>
        <end position="323"/>
    </location>
</feature>
<feature type="region of interest" description="Disordered" evidence="6">
    <location>
        <begin position="1"/>
        <end position="22"/>
    </location>
</feature>
<feature type="region of interest" description="Disordered" evidence="6">
    <location>
        <begin position="337"/>
        <end position="361"/>
    </location>
</feature>
<feature type="short sequence motif" description="Bipartite nuclear localization signal (NLS1)" evidence="1">
    <location>
        <begin position="287"/>
        <end position="314"/>
    </location>
</feature>
<feature type="short sequence motif" description="Nuclear localization signal (NLS1)" evidence="1">
    <location>
        <begin position="338"/>
        <end position="350"/>
    </location>
</feature>
<feature type="short sequence motif" description="nuclear export sequence (NES1)" evidence="1">
    <location>
        <begin position="443"/>
        <end position="452"/>
    </location>
</feature>
<feature type="short sequence motif" description="nuclear export sequence (NES2)" evidence="1">
    <location>
        <begin position="568"/>
        <end position="577"/>
    </location>
</feature>
<feature type="compositionally biased region" description="Low complexity" evidence="6">
    <location>
        <begin position="8"/>
        <end position="22"/>
    </location>
</feature>
<feature type="compositionally biased region" description="Pro residues" evidence="6">
    <location>
        <begin position="352"/>
        <end position="361"/>
    </location>
</feature>
<feature type="sequence conflict" description="In Ref. 2; AAA42058." evidence="9" ref="2">
    <original>R</original>
    <variation>A</variation>
    <location>
        <position position="182"/>
    </location>
</feature>
<feature type="sequence conflict" description="In Ref. 3; AAC53315." evidence="9" ref="3">
    <original>R</original>
    <variation>P</variation>
    <location>
        <position position="182"/>
    </location>
</feature>
<feature type="sequence conflict" description="In Ref. 2; AAA42058." evidence="9" ref="2">
    <original>S</original>
    <variation>P</variation>
    <location>
        <position position="250"/>
    </location>
</feature>
<feature type="sequence conflict" description="In Ref. 1; AAC52143." evidence="9" ref="1">
    <original>P</original>
    <variation>A</variation>
    <location>
        <position position="252"/>
    </location>
</feature>
<feature type="sequence conflict" description="In Ref. 2; AAA42058." evidence="9" ref="2">
    <original>V</original>
    <variation>G</variation>
    <location>
        <position position="362"/>
    </location>
</feature>
<feature type="sequence conflict" description="In Ref. 2; AAA42058." evidence="9" ref="2">
    <original>LISALVRA</original>
    <variation>DQCPRQT</variation>
    <location>
        <begin position="364"/>
        <end position="371"/>
    </location>
</feature>
<feature type="sequence conflict" description="In Ref. 2; AAA42058." evidence="9" ref="2">
    <original>D</original>
    <variation>S</variation>
    <location>
        <position position="434"/>
    </location>
</feature>
<dbReference type="EMBL" id="U01146">
    <property type="protein sequence ID" value="AAC52143.1"/>
    <property type="molecule type" value="mRNA"/>
</dbReference>
<dbReference type="EMBL" id="L08595">
    <property type="protein sequence ID" value="AAA42058.1"/>
    <property type="molecule type" value="mRNA"/>
</dbReference>
<dbReference type="EMBL" id="U72345">
    <property type="protein sequence ID" value="AAC53315.1"/>
    <property type="molecule type" value="mRNA"/>
</dbReference>
<dbReference type="PIR" id="I84692">
    <property type="entry name" value="I84692"/>
</dbReference>
<dbReference type="RefSeq" id="NP_062201.2">
    <property type="nucleotide sequence ID" value="NM_019328.3"/>
</dbReference>
<dbReference type="RefSeq" id="XP_006234263.1">
    <property type="nucleotide sequence ID" value="XM_006234201.3"/>
</dbReference>
<dbReference type="RefSeq" id="XP_017447486.1">
    <property type="nucleotide sequence ID" value="XM_017591997.1"/>
</dbReference>
<dbReference type="BMRB" id="Q07917"/>
<dbReference type="SMR" id="Q07917"/>
<dbReference type="FunCoup" id="Q07917">
    <property type="interactions" value="657"/>
</dbReference>
<dbReference type="IntAct" id="Q07917">
    <property type="interactions" value="1"/>
</dbReference>
<dbReference type="STRING" id="10116.ENSRNOP00000043812"/>
<dbReference type="BindingDB" id="Q07917"/>
<dbReference type="ChEMBL" id="CHEMBL4523278"/>
<dbReference type="GlyGen" id="Q07917">
    <property type="glycosylation" value="2 sites"/>
</dbReference>
<dbReference type="iPTMnet" id="Q07917"/>
<dbReference type="PhosphoSitePlus" id="Q07917"/>
<dbReference type="PaxDb" id="10116-ENSRNOP00000043812"/>
<dbReference type="GeneID" id="54278"/>
<dbReference type="KEGG" id="rno:54278"/>
<dbReference type="AGR" id="RGD:3202"/>
<dbReference type="CTD" id="4929"/>
<dbReference type="RGD" id="3202">
    <property type="gene designation" value="Nr4a2"/>
</dbReference>
<dbReference type="eggNOG" id="KOG4217">
    <property type="taxonomic scope" value="Eukaryota"/>
</dbReference>
<dbReference type="InParanoid" id="Q07917"/>
<dbReference type="OrthoDB" id="31016at9989"/>
<dbReference type="PhylomeDB" id="Q07917"/>
<dbReference type="TreeFam" id="TF315430"/>
<dbReference type="Reactome" id="R-RNO-383280">
    <property type="pathway name" value="Nuclear Receptor transcription pathway"/>
</dbReference>
<dbReference type="PRO" id="PR:Q07917"/>
<dbReference type="Proteomes" id="UP000002494">
    <property type="component" value="Unplaced"/>
</dbReference>
<dbReference type="GO" id="GO:0000785">
    <property type="term" value="C:chromatin"/>
    <property type="evidence" value="ECO:0000314"/>
    <property type="project" value="RGD"/>
</dbReference>
<dbReference type="GO" id="GO:0005737">
    <property type="term" value="C:cytoplasm"/>
    <property type="evidence" value="ECO:0007669"/>
    <property type="project" value="UniProtKB-SubCell"/>
</dbReference>
<dbReference type="GO" id="GO:0005634">
    <property type="term" value="C:nucleus"/>
    <property type="evidence" value="ECO:0000266"/>
    <property type="project" value="RGD"/>
</dbReference>
<dbReference type="GO" id="GO:0005667">
    <property type="term" value="C:transcription regulator complex"/>
    <property type="evidence" value="ECO:0000318"/>
    <property type="project" value="GO_Central"/>
</dbReference>
<dbReference type="GO" id="GO:0003677">
    <property type="term" value="F:DNA binding"/>
    <property type="evidence" value="ECO:0000266"/>
    <property type="project" value="RGD"/>
</dbReference>
<dbReference type="GO" id="GO:0001228">
    <property type="term" value="F:DNA-binding transcription activator activity, RNA polymerase II-specific"/>
    <property type="evidence" value="ECO:0000314"/>
    <property type="project" value="NTNU_SB"/>
</dbReference>
<dbReference type="GO" id="GO:0000981">
    <property type="term" value="F:DNA-binding transcription factor activity, RNA polymerase II-specific"/>
    <property type="evidence" value="ECO:0000318"/>
    <property type="project" value="GO_Central"/>
</dbReference>
<dbReference type="GO" id="GO:0035259">
    <property type="term" value="F:nuclear glucocorticoid receptor binding"/>
    <property type="evidence" value="ECO:0000266"/>
    <property type="project" value="RGD"/>
</dbReference>
<dbReference type="GO" id="GO:0004879">
    <property type="term" value="F:nuclear receptor activity"/>
    <property type="evidence" value="ECO:0007669"/>
    <property type="project" value="InterPro"/>
</dbReference>
<dbReference type="GO" id="GO:0046982">
    <property type="term" value="F:protein heterodimerization activity"/>
    <property type="evidence" value="ECO:0000250"/>
    <property type="project" value="UniProtKB"/>
</dbReference>
<dbReference type="GO" id="GO:0000978">
    <property type="term" value="F:RNA polymerase II cis-regulatory region sequence-specific DNA binding"/>
    <property type="evidence" value="ECO:0000314"/>
    <property type="project" value="NTNU_SB"/>
</dbReference>
<dbReference type="GO" id="GO:0000977">
    <property type="term" value="F:RNA polymerase II transcription regulatory region sequence-specific DNA binding"/>
    <property type="evidence" value="ECO:0000266"/>
    <property type="project" value="RGD"/>
</dbReference>
<dbReference type="GO" id="GO:0043565">
    <property type="term" value="F:sequence-specific DNA binding"/>
    <property type="evidence" value="ECO:0000314"/>
    <property type="project" value="MGI"/>
</dbReference>
<dbReference type="GO" id="GO:1990837">
    <property type="term" value="F:sequence-specific double-stranded DNA binding"/>
    <property type="evidence" value="ECO:0000266"/>
    <property type="project" value="RGD"/>
</dbReference>
<dbReference type="GO" id="GO:0008270">
    <property type="term" value="F:zinc ion binding"/>
    <property type="evidence" value="ECO:0007669"/>
    <property type="project" value="UniProtKB-KW"/>
</dbReference>
<dbReference type="GO" id="GO:0008344">
    <property type="term" value="P:adult locomotory behavior"/>
    <property type="evidence" value="ECO:0000266"/>
    <property type="project" value="RGD"/>
</dbReference>
<dbReference type="GO" id="GO:0071376">
    <property type="term" value="P:cellular response to corticotropin-releasing hormone stimulus"/>
    <property type="evidence" value="ECO:0000250"/>
    <property type="project" value="UniProtKB"/>
</dbReference>
<dbReference type="GO" id="GO:0034599">
    <property type="term" value="P:cellular response to oxidative stress"/>
    <property type="evidence" value="ECO:0000266"/>
    <property type="project" value="RGD"/>
</dbReference>
<dbReference type="GO" id="GO:0021953">
    <property type="term" value="P:central nervous system neuron differentiation"/>
    <property type="evidence" value="ECO:0000266"/>
    <property type="project" value="RGD"/>
</dbReference>
<dbReference type="GO" id="GO:0021952">
    <property type="term" value="P:central nervous system projection neuron axonogenesis"/>
    <property type="evidence" value="ECO:0000266"/>
    <property type="project" value="RGD"/>
</dbReference>
<dbReference type="GO" id="GO:0021987">
    <property type="term" value="P:cerebral cortex development"/>
    <property type="evidence" value="ECO:0000270"/>
    <property type="project" value="RGD"/>
</dbReference>
<dbReference type="GO" id="GO:0006351">
    <property type="term" value="P:DNA-templated transcription"/>
    <property type="evidence" value="ECO:0000250"/>
    <property type="project" value="UniProtKB"/>
</dbReference>
<dbReference type="GO" id="GO:0042416">
    <property type="term" value="P:dopamine biosynthetic process"/>
    <property type="evidence" value="ECO:0000266"/>
    <property type="project" value="RGD"/>
</dbReference>
<dbReference type="GO" id="GO:0042417">
    <property type="term" value="P:dopamine metabolic process"/>
    <property type="evidence" value="ECO:0000266"/>
    <property type="project" value="RGD"/>
</dbReference>
<dbReference type="GO" id="GO:0071542">
    <property type="term" value="P:dopaminergic neuron differentiation"/>
    <property type="evidence" value="ECO:0000250"/>
    <property type="project" value="UniProtKB"/>
</dbReference>
<dbReference type="GO" id="GO:0045444">
    <property type="term" value="P:fat cell differentiation"/>
    <property type="evidence" value="ECO:0000250"/>
    <property type="project" value="UniProtKB"/>
</dbReference>
<dbReference type="GO" id="GO:0010467">
    <property type="term" value="P:gene expression"/>
    <property type="evidence" value="ECO:0000266"/>
    <property type="project" value="RGD"/>
</dbReference>
<dbReference type="GO" id="GO:0051866">
    <property type="term" value="P:general adaptation syndrome"/>
    <property type="evidence" value="ECO:0000266"/>
    <property type="project" value="RGD"/>
</dbReference>
<dbReference type="GO" id="GO:0021986">
    <property type="term" value="P:habenula development"/>
    <property type="evidence" value="ECO:0000266"/>
    <property type="project" value="RGD"/>
</dbReference>
<dbReference type="GO" id="GO:0007611">
    <property type="term" value="P:learning or memory"/>
    <property type="evidence" value="ECO:0000315"/>
    <property type="project" value="RGD"/>
</dbReference>
<dbReference type="GO" id="GO:2001234">
    <property type="term" value="P:negative regulation of apoptotic signaling pathway"/>
    <property type="evidence" value="ECO:0000266"/>
    <property type="project" value="RGD"/>
</dbReference>
<dbReference type="GO" id="GO:0043524">
    <property type="term" value="P:negative regulation of neuron apoptotic process"/>
    <property type="evidence" value="ECO:0000315"/>
    <property type="project" value="RGD"/>
</dbReference>
<dbReference type="GO" id="GO:0000122">
    <property type="term" value="P:negative regulation of transcription by RNA polymerase II"/>
    <property type="evidence" value="ECO:0000266"/>
    <property type="project" value="RGD"/>
</dbReference>
<dbReference type="GO" id="GO:0007399">
    <property type="term" value="P:nervous system development"/>
    <property type="evidence" value="ECO:0000266"/>
    <property type="project" value="RGD"/>
</dbReference>
<dbReference type="GO" id="GO:0051402">
    <property type="term" value="P:neuron apoptotic process"/>
    <property type="evidence" value="ECO:0000266"/>
    <property type="project" value="RGD"/>
</dbReference>
<dbReference type="GO" id="GO:0030182">
    <property type="term" value="P:neuron differentiation"/>
    <property type="evidence" value="ECO:0000266"/>
    <property type="project" value="RGD"/>
</dbReference>
<dbReference type="GO" id="GO:0042551">
    <property type="term" value="P:neuron maturation"/>
    <property type="evidence" value="ECO:0000266"/>
    <property type="project" value="RGD"/>
</dbReference>
<dbReference type="GO" id="GO:0001764">
    <property type="term" value="P:neuron migration"/>
    <property type="evidence" value="ECO:0000266"/>
    <property type="project" value="RGD"/>
</dbReference>
<dbReference type="GO" id="GO:0045893">
    <property type="term" value="P:positive regulation of DNA-templated transcription"/>
    <property type="evidence" value="ECO:0000266"/>
    <property type="project" value="RGD"/>
</dbReference>
<dbReference type="GO" id="GO:0045944">
    <property type="term" value="P:positive regulation of transcription by RNA polymerase II"/>
    <property type="evidence" value="ECO:0000314"/>
    <property type="project" value="NTNU_SB"/>
</dbReference>
<dbReference type="GO" id="GO:0009791">
    <property type="term" value="P:post-embryonic development"/>
    <property type="evidence" value="ECO:0000266"/>
    <property type="project" value="RGD"/>
</dbReference>
<dbReference type="GO" id="GO:0006355">
    <property type="term" value="P:regulation of DNA-templated transcription"/>
    <property type="evidence" value="ECO:0000266"/>
    <property type="project" value="RGD"/>
</dbReference>
<dbReference type="GO" id="GO:0042053">
    <property type="term" value="P:regulation of dopamine metabolic process"/>
    <property type="evidence" value="ECO:0000266"/>
    <property type="project" value="RGD"/>
</dbReference>
<dbReference type="GO" id="GO:0010468">
    <property type="term" value="P:regulation of gene expression"/>
    <property type="evidence" value="ECO:0000266"/>
    <property type="project" value="RGD"/>
</dbReference>
<dbReference type="GO" id="GO:0043576">
    <property type="term" value="P:regulation of respiratory gaseous exchange"/>
    <property type="evidence" value="ECO:0000266"/>
    <property type="project" value="RGD"/>
</dbReference>
<dbReference type="GO" id="GO:0006357">
    <property type="term" value="P:regulation of transcription by RNA polymerase II"/>
    <property type="evidence" value="ECO:0000318"/>
    <property type="project" value="GO_Central"/>
</dbReference>
<dbReference type="GO" id="GO:0001975">
    <property type="term" value="P:response to amphetamine"/>
    <property type="evidence" value="ECO:0000266"/>
    <property type="project" value="RGD"/>
</dbReference>
<dbReference type="GO" id="GO:0001666">
    <property type="term" value="P:response to hypoxia"/>
    <property type="evidence" value="ECO:0000266"/>
    <property type="project" value="RGD"/>
</dbReference>
<dbReference type="GO" id="GO:0017085">
    <property type="term" value="P:response to insecticide"/>
    <property type="evidence" value="ECO:0000314"/>
    <property type="project" value="MGI"/>
</dbReference>
<dbReference type="GO" id="GO:0060041">
    <property type="term" value="P:retina development in camera-type eye"/>
    <property type="evidence" value="ECO:0000270"/>
    <property type="project" value="RGD"/>
</dbReference>
<dbReference type="GO" id="GO:0006366">
    <property type="term" value="P:transcription by RNA polymerase II"/>
    <property type="evidence" value="ECO:0000266"/>
    <property type="project" value="RGD"/>
</dbReference>
<dbReference type="CDD" id="cd06969">
    <property type="entry name" value="NR_DBD_NGFI-B"/>
    <property type="match status" value="1"/>
</dbReference>
<dbReference type="CDD" id="cd07071">
    <property type="entry name" value="NR_LBD_Nurr1"/>
    <property type="match status" value="1"/>
</dbReference>
<dbReference type="FunFam" id="1.10.565.10:FF:000008">
    <property type="entry name" value="Nuclear receptor subfamily 4 group A member 1"/>
    <property type="match status" value="1"/>
</dbReference>
<dbReference type="FunFam" id="3.30.50.10:FF:000009">
    <property type="entry name" value="nuclear receptor subfamily 4 group A member 2"/>
    <property type="match status" value="1"/>
</dbReference>
<dbReference type="Gene3D" id="3.30.50.10">
    <property type="entry name" value="Erythroid Transcription Factor GATA-1, subunit A"/>
    <property type="match status" value="1"/>
</dbReference>
<dbReference type="Gene3D" id="1.10.565.10">
    <property type="entry name" value="Retinoid X Receptor"/>
    <property type="match status" value="1"/>
</dbReference>
<dbReference type="InterPro" id="IPR035500">
    <property type="entry name" value="NHR-like_dom_sf"/>
</dbReference>
<dbReference type="InterPro" id="IPR003070">
    <property type="entry name" value="NR4A1-3"/>
</dbReference>
<dbReference type="InterPro" id="IPR003073">
    <property type="entry name" value="NR4A2"/>
</dbReference>
<dbReference type="InterPro" id="IPR000536">
    <property type="entry name" value="Nucl_hrmn_rcpt_lig-bd"/>
</dbReference>
<dbReference type="InterPro" id="IPR001723">
    <property type="entry name" value="Nuclear_hrmn_rcpt"/>
</dbReference>
<dbReference type="InterPro" id="IPR001628">
    <property type="entry name" value="Znf_hrmn_rcpt"/>
</dbReference>
<dbReference type="InterPro" id="IPR013088">
    <property type="entry name" value="Znf_NHR/GATA"/>
</dbReference>
<dbReference type="PANTHER" id="PTHR24085">
    <property type="entry name" value="NUCLEAR HORMONE RECEPTOR"/>
    <property type="match status" value="1"/>
</dbReference>
<dbReference type="PANTHER" id="PTHR24085:SF0">
    <property type="entry name" value="NUCLEAR RECEPTOR SUBFAMILY 4 GROUP A MEMBER 2"/>
    <property type="match status" value="1"/>
</dbReference>
<dbReference type="Pfam" id="PF00104">
    <property type="entry name" value="Hormone_recep"/>
    <property type="match status" value="1"/>
</dbReference>
<dbReference type="Pfam" id="PF00105">
    <property type="entry name" value="zf-C4"/>
    <property type="match status" value="1"/>
</dbReference>
<dbReference type="PRINTS" id="PR01284">
    <property type="entry name" value="NUCLEARECPTR"/>
</dbReference>
<dbReference type="PRINTS" id="PR01287">
    <property type="entry name" value="NURRNUCRCPTR"/>
</dbReference>
<dbReference type="PRINTS" id="PR00398">
    <property type="entry name" value="STRDHORMONER"/>
</dbReference>
<dbReference type="PRINTS" id="PR00047">
    <property type="entry name" value="STROIDFINGER"/>
</dbReference>
<dbReference type="SMART" id="SM00430">
    <property type="entry name" value="HOLI"/>
    <property type="match status" value="1"/>
</dbReference>
<dbReference type="SMART" id="SM00399">
    <property type="entry name" value="ZnF_C4"/>
    <property type="match status" value="1"/>
</dbReference>
<dbReference type="SUPFAM" id="SSF57716">
    <property type="entry name" value="Glucocorticoid receptor-like (DNA-binding domain)"/>
    <property type="match status" value="1"/>
</dbReference>
<dbReference type="SUPFAM" id="SSF48508">
    <property type="entry name" value="Nuclear receptor ligand-binding domain"/>
    <property type="match status" value="1"/>
</dbReference>
<dbReference type="PROSITE" id="PS51843">
    <property type="entry name" value="NR_LBD"/>
    <property type="match status" value="1"/>
</dbReference>
<dbReference type="PROSITE" id="PS00031">
    <property type="entry name" value="NUCLEAR_REC_DBD_1"/>
    <property type="match status" value="1"/>
</dbReference>
<dbReference type="PROSITE" id="PS51030">
    <property type="entry name" value="NUCLEAR_REC_DBD_2"/>
    <property type="match status" value="1"/>
</dbReference>
<accession>Q07917</accession>
<accession>O35865</accession>
<comment type="function">
    <text evidence="3 8">Transcriptional regulator which is important for the differentiation and maintenance of meso-diencephalic dopaminergic (mdDA) neurons during development (By similarity). It is crucial for expression of a set of genes such as SLC6A3, SLC18A2, TH and DRD2 which are essential for development of mdDA neurons (By similarity). May confer liver-specific regulation of delayed-early genes induced later in the G1 phase of regeneration along with NR4A1 (PubMed:8473329).</text>
</comment>
<comment type="subunit">
    <text evidence="1">Interacts with SFPQ, NCOR2, SIN3A and HADC1. The interaction with NCOR2 increases in the absence of PITX3. Interacts with PER2 (By similarity).</text>
</comment>
<comment type="subcellular location">
    <subcellularLocation>
        <location evidence="2">Cytoplasm</location>
    </subcellularLocation>
    <subcellularLocation>
        <location evidence="2">Nucleus</location>
    </subcellularLocation>
    <text evidence="2">Mostly nuclear; oxidative stress promotes cytoplasmic localization.</text>
</comment>
<comment type="tissue specificity">
    <text evidence="7">Shows a ubiquitous distribution in the cerebral cortex, hippocampus, thalamus, amygdala, and midbrain. Expression increases in prenatally stressed adult offspring in the ventral tegmental area, whereas no changes are observed in the substantia nigra area (at protein level). Not expressed in quiescent liver but is rapidly induced following partial hepatectomy and is specific to hepatic growth as it is not induced in other mitogen-treated cells. Expressed at very low levels in the lung, spleen and stomach and at high levels in the brain.</text>
</comment>
<comment type="domain">
    <text evidence="1">The ligand-binding domain (LBD) contains no cavity as a result of the tight packing of side chains from several bulky hydrophobic residues in the region normally occupied by ligands. NR4A2 lacks a 'classical' binding site for coactivators (By similarity).</text>
</comment>
<comment type="similarity">
    <text evidence="9">Belongs to the nuclear hormone receptor family. NR4 subfamily.</text>
</comment>
<evidence type="ECO:0000250" key="1"/>
<evidence type="ECO:0000250" key="2">
    <source>
        <dbReference type="UniProtKB" id="P43354"/>
    </source>
</evidence>
<evidence type="ECO:0000250" key="3">
    <source>
        <dbReference type="UniProtKB" id="Q06219"/>
    </source>
</evidence>
<evidence type="ECO:0000255" key="4">
    <source>
        <dbReference type="PROSITE-ProRule" id="PRU00407"/>
    </source>
</evidence>
<evidence type="ECO:0000255" key="5">
    <source>
        <dbReference type="PROSITE-ProRule" id="PRU01189"/>
    </source>
</evidence>
<evidence type="ECO:0000256" key="6">
    <source>
        <dbReference type="SAM" id="MobiDB-lite"/>
    </source>
</evidence>
<evidence type="ECO:0000269" key="7">
    <source>
    </source>
</evidence>
<evidence type="ECO:0000269" key="8">
    <source>
    </source>
</evidence>
<evidence type="ECO:0000305" key="9"/>
<protein>
    <recommendedName>
        <fullName>Nuclear receptor subfamily 4 group A member 2</fullName>
    </recommendedName>
    <alternativeName>
        <fullName>NUR-related factor 1</fullName>
    </alternativeName>
    <alternativeName>
        <fullName>Nuclear orphan receptor HZF-3</fullName>
    </alternativeName>
    <alternativeName>
        <fullName>Orphan nuclear receptor NURR1</fullName>
    </alternativeName>
    <alternativeName>
        <fullName>Regenerating liver nuclear receptor 1</fullName>
        <shortName>RNR-1</shortName>
    </alternativeName>
    <alternativeName>
        <fullName>SL-322</fullName>
    </alternativeName>
</protein>
<proteinExistence type="evidence at protein level"/>
<name>NR4A2_RAT</name>